<accession>P57419</accession>
<protein>
    <recommendedName>
        <fullName>Flagellar basal body rod protein FlgB</fullName>
    </recommendedName>
</protein>
<organism>
    <name type="scientific">Buchnera aphidicola subsp. Acyrthosiphon pisum (strain APS)</name>
    <name type="common">Acyrthosiphon pisum symbiotic bacterium</name>
    <dbReference type="NCBI Taxonomy" id="107806"/>
    <lineage>
        <taxon>Bacteria</taxon>
        <taxon>Pseudomonadati</taxon>
        <taxon>Pseudomonadota</taxon>
        <taxon>Gammaproteobacteria</taxon>
        <taxon>Enterobacterales</taxon>
        <taxon>Erwiniaceae</taxon>
        <taxon>Buchnera</taxon>
    </lineage>
</organism>
<proteinExistence type="inferred from homology"/>
<feature type="chain" id="PRO_0000180787" description="Flagellar basal body rod protein FlgB">
    <location>
        <begin position="1"/>
        <end position="133"/>
    </location>
</feature>
<keyword id="KW-0975">Bacterial flagellum</keyword>
<keyword id="KW-1185">Reference proteome</keyword>
<comment type="function">
    <text evidence="1">Structural component of flagellum, the bacterial motility apparatus. Part of the rod structure of flagellar basal body (By similarity).</text>
</comment>
<comment type="subunit">
    <text evidence="1">The basal body constitutes a major portion of the flagellar organelle and consists of a number of rings mounted on a central rod. In Gram-negative bacteria, at least four rings, L, P, S and M are present, whereas Gram-positive bacteria lack the L and P rings. The rod consists of about 26 subunits of FlgG in the distal portion, and FlgB, FlgC and FlgF build up the proximal portion of the rod with about 6 subunits each. Rod assembly occurs by export via the flagellum-specific pathway of its constituent proteins and by their incorporation into the rod structure in the probable order of FlgB, FlgC, FlgF and FlgG. Another protein, FliE, also assembles onto the stable rod structure (By similarity).</text>
</comment>
<comment type="subcellular location">
    <subcellularLocation>
        <location evidence="1">Bacterial flagellum basal body</location>
    </subcellularLocation>
</comment>
<comment type="similarity">
    <text evidence="2">Belongs to the flagella basal body rod proteins family.</text>
</comment>
<comment type="sequence caution" evidence="2">
    <conflict type="frameshift">
        <sequence resource="EMBL-CDS" id="BAB13042"/>
    </conflict>
</comment>
<name>FLGB_BUCAI</name>
<evidence type="ECO:0000250" key="1"/>
<evidence type="ECO:0000305" key="2"/>
<reference key="1">
    <citation type="journal article" date="2000" name="Nature">
        <title>Genome sequence of the endocellular bacterial symbiont of aphids Buchnera sp. APS.</title>
        <authorList>
            <person name="Shigenobu S."/>
            <person name="Watanabe H."/>
            <person name="Hattori M."/>
            <person name="Sakaki Y."/>
            <person name="Ishikawa H."/>
        </authorList>
    </citation>
    <scope>NUCLEOTIDE SEQUENCE [LARGE SCALE GENOMIC DNA]</scope>
    <source>
        <strain>APS</strain>
    </source>
</reference>
<gene>
    <name type="primary">flgB</name>
    <name type="ordered locus">BU337</name>
</gene>
<sequence length="133" mass="15627">MFNKINQIFNFHQQALNLCSQRQEILSANIANADTPGYKSIDFNFKNELNKTLYKNKKTIFLKKTSPNHLNEKHKNLFLLKTIPVLTNQIKQDGNTVNMDRERIEFLNNSIKYQSSLVFIKNEIKNMMYVLKG</sequence>
<dbReference type="EMBL" id="BA000003">
    <property type="protein sequence ID" value="BAB13042.1"/>
    <property type="status" value="ALT_FRAME"/>
    <property type="molecule type" value="Genomic_DNA"/>
</dbReference>
<dbReference type="RefSeq" id="NP_240156.1">
    <property type="nucleotide sequence ID" value="NC_002528.1"/>
</dbReference>
<dbReference type="RefSeq" id="WP_009874292.1">
    <property type="nucleotide sequence ID" value="NZ_AP036055.1"/>
</dbReference>
<dbReference type="SMR" id="P57419"/>
<dbReference type="EnsemblBacteria" id="BAB13042">
    <property type="protein sequence ID" value="BAB13042"/>
    <property type="gene ID" value="BAB13042"/>
</dbReference>
<dbReference type="KEGG" id="buc:BU337"/>
<dbReference type="PATRIC" id="fig|107806.10.peg.349"/>
<dbReference type="eggNOG" id="COG1815">
    <property type="taxonomic scope" value="Bacteria"/>
</dbReference>
<dbReference type="HOGENOM" id="CLU_125463_3_0_6"/>
<dbReference type="Proteomes" id="UP000001806">
    <property type="component" value="Chromosome"/>
</dbReference>
<dbReference type="GO" id="GO:0030694">
    <property type="term" value="C:bacterial-type flagellum basal body, rod"/>
    <property type="evidence" value="ECO:0007669"/>
    <property type="project" value="InterPro"/>
</dbReference>
<dbReference type="GO" id="GO:0071973">
    <property type="term" value="P:bacterial-type flagellum-dependent cell motility"/>
    <property type="evidence" value="ECO:0007669"/>
    <property type="project" value="InterPro"/>
</dbReference>
<dbReference type="InterPro" id="IPR001444">
    <property type="entry name" value="Flag_bb_rod_N"/>
</dbReference>
<dbReference type="InterPro" id="IPR019776">
    <property type="entry name" value="Flagellar_basal_body_rod_CS"/>
</dbReference>
<dbReference type="InterPro" id="IPR006300">
    <property type="entry name" value="FlgB"/>
</dbReference>
<dbReference type="NCBIfam" id="TIGR01396">
    <property type="entry name" value="FlgB"/>
    <property type="match status" value="1"/>
</dbReference>
<dbReference type="PANTHER" id="PTHR30435:SF12">
    <property type="entry name" value="FLAGELLAR BASAL BODY ROD PROTEIN FLGB"/>
    <property type="match status" value="1"/>
</dbReference>
<dbReference type="PANTHER" id="PTHR30435">
    <property type="entry name" value="FLAGELLAR PROTEIN"/>
    <property type="match status" value="1"/>
</dbReference>
<dbReference type="Pfam" id="PF00460">
    <property type="entry name" value="Flg_bb_rod"/>
    <property type="match status" value="1"/>
</dbReference>
<dbReference type="PIRSF" id="PIRSF002889">
    <property type="entry name" value="Rod_FlgB"/>
    <property type="match status" value="1"/>
</dbReference>
<dbReference type="PROSITE" id="PS00588">
    <property type="entry name" value="FLAGELLA_BB_ROD"/>
    <property type="match status" value="1"/>
</dbReference>